<sequence>MDLHESESRTHVLSTDGDDGYIDMEVNLSSSSSSSTSSSSFFSFPVTSSPPQSREFEFQMCSSAVASGESTTSPADELFYKGQLLPLHLPPRLKMVQKLLLASSSSTAATETPISPRAAADVLSPRRFSSCEIGQDENCFFEISTELKRFIESNENHLGNSWSKKIKHSSITQKLKASRAYIKALFSKQACSDSSEINPRFKIEPSKVSRKKNPFVNSENPLLIHRRSFSGVIQRHSQAKCSTSSSSSSSASSLSSSFSFGSNGSLDLQTLMRSSNASDNSIEGAIEHCKQSFTTRKSNVTESELCSSRTSVSTCGDLDKD</sequence>
<keyword id="KW-1003">Cell membrane</keyword>
<keyword id="KW-0472">Membrane</keyword>
<keyword id="KW-1185">Reference proteome</keyword>
<reference key="1">
    <citation type="journal article" date="1999" name="Nature">
        <title>Sequence and analysis of chromosome 2 of the plant Arabidopsis thaliana.</title>
        <authorList>
            <person name="Lin X."/>
            <person name="Kaul S."/>
            <person name="Rounsley S.D."/>
            <person name="Shea T.P."/>
            <person name="Benito M.-I."/>
            <person name="Town C.D."/>
            <person name="Fujii C.Y."/>
            <person name="Mason T.M."/>
            <person name="Bowman C.L."/>
            <person name="Barnstead M.E."/>
            <person name="Feldblyum T.V."/>
            <person name="Buell C.R."/>
            <person name="Ketchum K.A."/>
            <person name="Lee J.J."/>
            <person name="Ronning C.M."/>
            <person name="Koo H.L."/>
            <person name="Moffat K.S."/>
            <person name="Cronin L.A."/>
            <person name="Shen M."/>
            <person name="Pai G."/>
            <person name="Van Aken S."/>
            <person name="Umayam L."/>
            <person name="Tallon L.J."/>
            <person name="Gill J.E."/>
            <person name="Adams M.D."/>
            <person name="Carrera A.J."/>
            <person name="Creasy T.H."/>
            <person name="Goodman H.M."/>
            <person name="Somerville C.R."/>
            <person name="Copenhaver G.P."/>
            <person name="Preuss D."/>
            <person name="Nierman W.C."/>
            <person name="White O."/>
            <person name="Eisen J.A."/>
            <person name="Salzberg S.L."/>
            <person name="Fraser C.M."/>
            <person name="Venter J.C."/>
        </authorList>
    </citation>
    <scope>NUCLEOTIDE SEQUENCE [LARGE SCALE GENOMIC DNA]</scope>
    <source>
        <strain>cv. Columbia</strain>
    </source>
</reference>
<reference key="2">
    <citation type="journal article" date="2017" name="Plant J.">
        <title>Araport11: a complete reannotation of the Arabidopsis thaliana reference genome.</title>
        <authorList>
            <person name="Cheng C.Y."/>
            <person name="Krishnakumar V."/>
            <person name="Chan A.P."/>
            <person name="Thibaud-Nissen F."/>
            <person name="Schobel S."/>
            <person name="Town C.D."/>
        </authorList>
    </citation>
    <scope>GENOME REANNOTATION</scope>
    <source>
        <strain>cv. Columbia</strain>
    </source>
</reference>
<reference key="3">
    <citation type="submission" date="2004-03" db="EMBL/GenBank/DDBJ databases">
        <title>Arabidopsis ORF clones.</title>
        <authorList>
            <person name="Cheuk R."/>
            <person name="Chen H."/>
            <person name="Kim C.J."/>
            <person name="Shinn P."/>
            <person name="Carninci P."/>
            <person name="Hayashizaki Y."/>
            <person name="Ishida J."/>
            <person name="Kamiya A."/>
            <person name="Kawai J."/>
            <person name="Narusaka M."/>
            <person name="Sakurai T."/>
            <person name="Satou M."/>
            <person name="Seki M."/>
            <person name="Shinozaki K."/>
            <person name="Ecker J.R."/>
        </authorList>
    </citation>
    <scope>NUCLEOTIDE SEQUENCE [LARGE SCALE MRNA]</scope>
    <source>
        <strain>cv. Columbia</strain>
    </source>
</reference>
<reference key="4">
    <citation type="submission" date="2006-07" db="EMBL/GenBank/DDBJ databases">
        <title>Large-scale analysis of RIKEN Arabidopsis full-length (RAFL) cDNAs.</title>
        <authorList>
            <person name="Totoki Y."/>
            <person name="Seki M."/>
            <person name="Ishida J."/>
            <person name="Nakajima M."/>
            <person name="Enju A."/>
            <person name="Kamiya A."/>
            <person name="Narusaka M."/>
            <person name="Shin-i T."/>
            <person name="Nakagawa M."/>
            <person name="Sakamoto N."/>
            <person name="Oishi K."/>
            <person name="Kohara Y."/>
            <person name="Kobayashi M."/>
            <person name="Toyoda A."/>
            <person name="Sakaki Y."/>
            <person name="Sakurai T."/>
            <person name="Iida K."/>
            <person name="Akiyama K."/>
            <person name="Satou M."/>
            <person name="Toyoda T."/>
            <person name="Konagaya A."/>
            <person name="Carninci P."/>
            <person name="Kawai J."/>
            <person name="Hayashizaki Y."/>
            <person name="Shinozaki K."/>
        </authorList>
    </citation>
    <scope>NUCLEOTIDE SEQUENCE [LARGE SCALE MRNA]</scope>
    <source>
        <strain>cv. Columbia</strain>
    </source>
</reference>
<reference key="5">
    <citation type="journal article" date="2011" name="Genes Dev.">
        <title>Tyrosine phosphorylation controls brassinosteroid receptor activation by triggering membrane release of its kinase inhibitor.</title>
        <authorList>
            <person name="Jaillais Y."/>
            <person name="Hothorn M."/>
            <person name="Belkhadir Y."/>
            <person name="Dabi T."/>
            <person name="Nimchuk Z.L."/>
            <person name="Meyerowitz E.M."/>
            <person name="Chory J."/>
        </authorList>
    </citation>
    <scope>GENE FAMILY</scope>
    <scope>NOMENCLATURE</scope>
</reference>
<proteinExistence type="evidence at transcript level"/>
<protein>
    <recommendedName>
        <fullName>Probable membrane-associated kinase regulator 3</fullName>
    </recommendedName>
</protein>
<evidence type="ECO:0000250" key="1"/>
<evidence type="ECO:0000256" key="2">
    <source>
        <dbReference type="SAM" id="MobiDB-lite"/>
    </source>
</evidence>
<evidence type="ECO:0000305" key="3"/>
<feature type="chain" id="PRO_0000410478" description="Probable membrane-associated kinase regulator 3">
    <location>
        <begin position="1"/>
        <end position="321"/>
    </location>
</feature>
<feature type="region of interest" description="Disordered" evidence="2">
    <location>
        <begin position="297"/>
        <end position="321"/>
    </location>
</feature>
<feature type="compositionally biased region" description="Polar residues" evidence="2">
    <location>
        <begin position="297"/>
        <end position="314"/>
    </location>
</feature>
<feature type="sequence conflict" description="In Ref. 4; BAE98854." evidence="3" ref="4">
    <original>A</original>
    <variation>V</variation>
    <location>
        <position position="109"/>
    </location>
</feature>
<dbReference type="EMBL" id="AC005896">
    <property type="protein sequence ID" value="AAC98057.1"/>
    <property type="molecule type" value="Genomic_DNA"/>
</dbReference>
<dbReference type="EMBL" id="CP002685">
    <property type="protein sequence ID" value="AEC09390.1"/>
    <property type="molecule type" value="Genomic_DNA"/>
</dbReference>
<dbReference type="EMBL" id="BT011736">
    <property type="protein sequence ID" value="AAS49099.1"/>
    <property type="molecule type" value="mRNA"/>
</dbReference>
<dbReference type="EMBL" id="AK226754">
    <property type="protein sequence ID" value="BAE98854.1"/>
    <property type="molecule type" value="mRNA"/>
</dbReference>
<dbReference type="PIR" id="A84792">
    <property type="entry name" value="A84792"/>
</dbReference>
<dbReference type="RefSeq" id="NP_181274.1">
    <property type="nucleotide sequence ID" value="NM_129293.4"/>
</dbReference>
<dbReference type="FunCoup" id="Q9ZUS8">
    <property type="interactions" value="1"/>
</dbReference>
<dbReference type="STRING" id="3702.Q9ZUS8"/>
<dbReference type="iPTMnet" id="Q9ZUS8"/>
<dbReference type="PaxDb" id="3702-AT2G37380.1"/>
<dbReference type="ProteomicsDB" id="238512"/>
<dbReference type="EnsemblPlants" id="AT2G37380.1">
    <property type="protein sequence ID" value="AT2G37380.1"/>
    <property type="gene ID" value="AT2G37380"/>
</dbReference>
<dbReference type="GeneID" id="818314"/>
<dbReference type="Gramene" id="AT2G37380.1">
    <property type="protein sequence ID" value="AT2G37380.1"/>
    <property type="gene ID" value="AT2G37380"/>
</dbReference>
<dbReference type="KEGG" id="ath:AT2G37380"/>
<dbReference type="Araport" id="AT2G37380"/>
<dbReference type="TAIR" id="AT2G37380">
    <property type="gene designation" value="MAKR3"/>
</dbReference>
<dbReference type="eggNOG" id="ENOG502RCYF">
    <property type="taxonomic scope" value="Eukaryota"/>
</dbReference>
<dbReference type="HOGENOM" id="CLU_048960_0_0_1"/>
<dbReference type="InParanoid" id="Q9ZUS8"/>
<dbReference type="OMA" id="NDHKISP"/>
<dbReference type="PhylomeDB" id="Q9ZUS8"/>
<dbReference type="PRO" id="PR:Q9ZUS8"/>
<dbReference type="Proteomes" id="UP000006548">
    <property type="component" value="Chromosome 2"/>
</dbReference>
<dbReference type="ExpressionAtlas" id="Q9ZUS8">
    <property type="expression patterns" value="baseline and differential"/>
</dbReference>
<dbReference type="GO" id="GO:0005886">
    <property type="term" value="C:plasma membrane"/>
    <property type="evidence" value="ECO:0007669"/>
    <property type="project" value="UniProtKB-SubCell"/>
</dbReference>
<dbReference type="GO" id="GO:0019210">
    <property type="term" value="F:kinase inhibitor activity"/>
    <property type="evidence" value="ECO:0007669"/>
    <property type="project" value="InterPro"/>
</dbReference>
<dbReference type="InterPro" id="IPR039620">
    <property type="entry name" value="BKI1/MAKR1/3/4"/>
</dbReference>
<dbReference type="PANTHER" id="PTHR33312:SF21">
    <property type="entry name" value="MEMBRANE-ASSOCIATED KINASE REGULATOR 3-RELATED"/>
    <property type="match status" value="1"/>
</dbReference>
<dbReference type="PANTHER" id="PTHR33312">
    <property type="entry name" value="MEMBRANE-ASSOCIATED KINASE REGULATOR 4-RELATED"/>
    <property type="match status" value="1"/>
</dbReference>
<accession>Q9ZUS8</accession>
<accession>Q0WVJ4</accession>
<organism>
    <name type="scientific">Arabidopsis thaliana</name>
    <name type="common">Mouse-ear cress</name>
    <dbReference type="NCBI Taxonomy" id="3702"/>
    <lineage>
        <taxon>Eukaryota</taxon>
        <taxon>Viridiplantae</taxon>
        <taxon>Streptophyta</taxon>
        <taxon>Embryophyta</taxon>
        <taxon>Tracheophyta</taxon>
        <taxon>Spermatophyta</taxon>
        <taxon>Magnoliopsida</taxon>
        <taxon>eudicotyledons</taxon>
        <taxon>Gunneridae</taxon>
        <taxon>Pentapetalae</taxon>
        <taxon>rosids</taxon>
        <taxon>malvids</taxon>
        <taxon>Brassicales</taxon>
        <taxon>Brassicaceae</taxon>
        <taxon>Camelineae</taxon>
        <taxon>Arabidopsis</taxon>
    </lineage>
</organism>
<name>MAKR3_ARATH</name>
<comment type="subcellular location">
    <subcellularLocation>
        <location evidence="1">Cell membrane</location>
    </subcellularLocation>
</comment>
<gene>
    <name type="primary">MAKR3</name>
    <name type="ordered locus">At2g37380</name>
    <name type="ORF">F3G5.17</name>
</gene>